<accession>Q5A1A0</accession>
<accession>A0A1D8PMI6</accession>
<accession>Q5A1F9</accession>
<comment type="function">
    <text evidence="2">ATP-dependent DNA helicase involved in DNA damage repair by homologous recombination and in genome maintenance. Capable of unwinding D-loops. Plays a role in limiting crossover recombinants during mitotic DNA double-strand break (DSB) repair. Component of a FANCM-MHF complex which promotes gene conversion at blocked replication forks, probably by reversal of the stalled fork.</text>
</comment>
<comment type="catalytic activity">
    <reaction evidence="2">
        <text>ATP + H2O = ADP + phosphate + H(+)</text>
        <dbReference type="Rhea" id="RHEA:13065"/>
        <dbReference type="ChEBI" id="CHEBI:15377"/>
        <dbReference type="ChEBI" id="CHEBI:15378"/>
        <dbReference type="ChEBI" id="CHEBI:30616"/>
        <dbReference type="ChEBI" id="CHEBI:43474"/>
        <dbReference type="ChEBI" id="CHEBI:456216"/>
        <dbReference type="EC" id="3.6.4.12"/>
    </reaction>
</comment>
<comment type="subunit">
    <text evidence="2">Interacts with the MHF histone-fold complex to form the FANCM-MHF complex.</text>
</comment>
<comment type="subcellular location">
    <subcellularLocation>
        <location evidence="1">Nucleus</location>
    </subcellularLocation>
</comment>
<comment type="similarity">
    <text evidence="6">Belongs to the DEAD box helicase family. DEAH subfamily. FANCM sub-subfamily.</text>
</comment>
<proteinExistence type="inferred from homology"/>
<organism>
    <name type="scientific">Candida albicans (strain SC5314 / ATCC MYA-2876)</name>
    <name type="common">Yeast</name>
    <dbReference type="NCBI Taxonomy" id="237561"/>
    <lineage>
        <taxon>Eukaryota</taxon>
        <taxon>Fungi</taxon>
        <taxon>Dikarya</taxon>
        <taxon>Ascomycota</taxon>
        <taxon>Saccharomycotina</taxon>
        <taxon>Pichiomycetes</taxon>
        <taxon>Debaryomycetaceae</taxon>
        <taxon>Candida/Lodderomyces clade</taxon>
        <taxon>Candida</taxon>
    </lineage>
</organism>
<protein>
    <recommendedName>
        <fullName evidence="1">ATP-dependent DNA helicase MPH1</fullName>
        <ecNumber evidence="1 2">3.6.4.12</ecNumber>
    </recommendedName>
    <alternativeName>
        <fullName evidence="2">FANCM-like protein 1</fullName>
    </alternativeName>
</protein>
<name>MPH1_CANAL</name>
<sequence length="1187" mass="135038">MIIFATPKVCKGKTRILYFYLSKLFFYVYFFFLIYYSIQKHSYINSTMPIIPLEDDKDDDWILEDEDDPEFQAILQGNSSKGPAQRTLEGSVAAVSTRPQNDKYETIPVPVKINTPTHHAMDFENLKTYIYPTNFEIRDYQYNIVERAFYDNLLVALPTGLGKTFIASTVMLNFLRWFPISKIIFMAPTRPLVAQQIKACCSIAGIPSSKVAILLDKTRRNRAEIWNSRQVFFTTPQVVENDLASGVVNPKSIALLVIDEAHRAKGNYSYNNVVKFINRFSDSYRILALTATPASDVEGVQQIIDNLNISKVEVRTEQSIDIVRHMKRKTVERKTCYPSSEITECIELLAEGITPVLNTAKERGLLDLTDPTRINFLQCMEISRKIVANPTIPEGLKWSNYFILQLLGMVGQCYRRLNIYGIRSFQSYFNEKFLEFKTKWNAKKSTNKLNADFYFSDPITTLMDRVEELSKTLTYGHPKIEALMEELDDFFKNHETAGSRVIIFTEFRESALEIVQCIEKANDNRKPHIFIGQSKEKEKFDVENFGKKKQKGQTKKKKDERPSTRSSSENAQMTGMSQKLQKEIIKKFKKGVFNILVATSIGEEGLDIGEVDLIICYDSTSSPIKNIQRMGRTGRKRDGKVLMLFSSNEESKFDKAMGGYEYIQQHIMKGDFIQLRPQHRMIPDEYKPEAVKQLIQIPEENIELKAEDDEDEIIRIATSYMLGGKGKKGKKANNNSTKKPAKTFFMPDNVETGFKSAATMVRKVGDNKSLAERNKEKTFLDKLVDSDSESEVDKENENVIQEVDKSKNQEQNDHIITELDNTEQSVAGNTKSTTNGTSYSEPENNNQVNQESVTANLDSVARVPEPEVIENSESEEEQISKITHNTPATSVDLSNGPEETSYKIDSVLIDLIDDDFTFSSDTEGDKVEVIDAVSPEVCKLPEKPATPPIRKSLGVKRKVNKTPDPESNSISIPSSTTKKSHNEVTRKVVQDPSTTNKKSLGVKRPRPVSIIDQLKRQKIRSQVIVSRETQSIIEHESRTQSSLPSPRNMSDEISEIDVIIDLDDDDDDDNKVNGHDKSQTTISKVQPIYEFSNKEDEGFLSSSQTRELYKNYYIAIDSSDDIPFYDPVQGFSKIKDTDKFTMGRTGPITHSLRTQRLFQACNAEFDSQLAAQTKDNDKQDYTFILKK</sequence>
<feature type="chain" id="PRO_0000333370" description="ATP-dependent DNA helicase MPH1">
    <location>
        <begin position="1"/>
        <end position="1187"/>
    </location>
</feature>
<feature type="domain" description="Helicase ATP-binding" evidence="3">
    <location>
        <begin position="144"/>
        <end position="311"/>
    </location>
</feature>
<feature type="domain" description="Helicase C-terminal" evidence="4">
    <location>
        <begin position="486"/>
        <end position="681"/>
    </location>
</feature>
<feature type="region of interest" description="Disordered" evidence="5">
    <location>
        <begin position="542"/>
        <end position="576"/>
    </location>
</feature>
<feature type="region of interest" description="Disordered" evidence="5">
    <location>
        <begin position="781"/>
        <end position="848"/>
    </location>
</feature>
<feature type="region of interest" description="Disordered" evidence="5">
    <location>
        <begin position="941"/>
        <end position="1003"/>
    </location>
</feature>
<feature type="short sequence motif" description="DEAH box" evidence="3">
    <location>
        <begin position="259"/>
        <end position="262"/>
    </location>
</feature>
<feature type="compositionally biased region" description="Basic residues" evidence="5">
    <location>
        <begin position="547"/>
        <end position="556"/>
    </location>
</feature>
<feature type="compositionally biased region" description="Polar residues" evidence="5">
    <location>
        <begin position="564"/>
        <end position="576"/>
    </location>
</feature>
<feature type="compositionally biased region" description="Basic and acidic residues" evidence="5">
    <location>
        <begin position="781"/>
        <end position="817"/>
    </location>
</feature>
<feature type="compositionally biased region" description="Polar residues" evidence="5">
    <location>
        <begin position="822"/>
        <end position="848"/>
    </location>
</feature>
<feature type="compositionally biased region" description="Low complexity" evidence="5">
    <location>
        <begin position="967"/>
        <end position="977"/>
    </location>
</feature>
<feature type="compositionally biased region" description="Basic and acidic residues" evidence="5">
    <location>
        <begin position="980"/>
        <end position="989"/>
    </location>
</feature>
<feature type="binding site" evidence="3">
    <location>
        <begin position="157"/>
        <end position="164"/>
    </location>
    <ligand>
        <name>ATP</name>
        <dbReference type="ChEBI" id="CHEBI:30616"/>
    </ligand>
</feature>
<dbReference type="EC" id="3.6.4.12" evidence="1 2"/>
<dbReference type="EMBL" id="CP017626">
    <property type="protein sequence ID" value="AOW29345.1"/>
    <property type="molecule type" value="Genomic_DNA"/>
</dbReference>
<dbReference type="RefSeq" id="XP_715573.2">
    <property type="nucleotide sequence ID" value="XM_710480.2"/>
</dbReference>
<dbReference type="SMR" id="Q5A1A0"/>
<dbReference type="FunCoup" id="Q5A1A0">
    <property type="interactions" value="251"/>
</dbReference>
<dbReference type="STRING" id="237561.Q5A1A0"/>
<dbReference type="EnsemblFungi" id="C4_06190C_A-T">
    <property type="protein sequence ID" value="C4_06190C_A-T-p1"/>
    <property type="gene ID" value="C4_06190C_A"/>
</dbReference>
<dbReference type="GeneID" id="3642817"/>
<dbReference type="KEGG" id="cal:CAALFM_C406190CA"/>
<dbReference type="CGD" id="CAL0000186482">
    <property type="gene designation" value="MPH1"/>
</dbReference>
<dbReference type="VEuPathDB" id="FungiDB:C4_06190C_A"/>
<dbReference type="eggNOG" id="KOG0354">
    <property type="taxonomic scope" value="Eukaryota"/>
</dbReference>
<dbReference type="HOGENOM" id="CLU_002513_1_1_1"/>
<dbReference type="InParanoid" id="Q5A1A0"/>
<dbReference type="OrthoDB" id="164902at2759"/>
<dbReference type="PRO" id="PR:Q5A1A0"/>
<dbReference type="Proteomes" id="UP000000559">
    <property type="component" value="Chromosome 4"/>
</dbReference>
<dbReference type="GO" id="GO:0005634">
    <property type="term" value="C:nucleus"/>
    <property type="evidence" value="ECO:0007669"/>
    <property type="project" value="UniProtKB-SubCell"/>
</dbReference>
<dbReference type="GO" id="GO:0043138">
    <property type="term" value="F:3'-5' DNA helicase activity"/>
    <property type="evidence" value="ECO:0000318"/>
    <property type="project" value="GO_Central"/>
</dbReference>
<dbReference type="GO" id="GO:0005524">
    <property type="term" value="F:ATP binding"/>
    <property type="evidence" value="ECO:0007669"/>
    <property type="project" value="UniProtKB-KW"/>
</dbReference>
<dbReference type="GO" id="GO:0016887">
    <property type="term" value="F:ATP hydrolysis activity"/>
    <property type="evidence" value="ECO:0007669"/>
    <property type="project" value="RHEA"/>
</dbReference>
<dbReference type="GO" id="GO:0000400">
    <property type="term" value="F:four-way junction DNA binding"/>
    <property type="evidence" value="ECO:0000318"/>
    <property type="project" value="GO_Central"/>
</dbReference>
<dbReference type="GO" id="GO:0009378">
    <property type="term" value="F:four-way junction helicase activity"/>
    <property type="evidence" value="ECO:0000318"/>
    <property type="project" value="GO_Central"/>
</dbReference>
<dbReference type="GO" id="GO:0045003">
    <property type="term" value="P:double-strand break repair via synthesis-dependent strand annealing"/>
    <property type="evidence" value="ECO:0000318"/>
    <property type="project" value="GO_Central"/>
</dbReference>
<dbReference type="GO" id="GO:0036297">
    <property type="term" value="P:interstrand cross-link repair"/>
    <property type="evidence" value="ECO:0000318"/>
    <property type="project" value="GO_Central"/>
</dbReference>
<dbReference type="CDD" id="cd18033">
    <property type="entry name" value="DEXDc_FANCM"/>
    <property type="match status" value="1"/>
</dbReference>
<dbReference type="CDD" id="cd12091">
    <property type="entry name" value="FANCM_ID"/>
    <property type="match status" value="1"/>
</dbReference>
<dbReference type="FunFam" id="3.40.50.300:FF:000861">
    <property type="entry name" value="Fanconi anemia, complementation group M"/>
    <property type="match status" value="1"/>
</dbReference>
<dbReference type="Gene3D" id="3.40.50.300">
    <property type="entry name" value="P-loop containing nucleotide triphosphate hydrolases"/>
    <property type="match status" value="2"/>
</dbReference>
<dbReference type="InterPro" id="IPR039686">
    <property type="entry name" value="FANCM/Mph1-like_ID"/>
</dbReference>
<dbReference type="InterPro" id="IPR044749">
    <property type="entry name" value="FANCM_DEXDc"/>
</dbReference>
<dbReference type="InterPro" id="IPR006935">
    <property type="entry name" value="Helicase/UvrB_N"/>
</dbReference>
<dbReference type="InterPro" id="IPR014001">
    <property type="entry name" value="Helicase_ATP-bd"/>
</dbReference>
<dbReference type="InterPro" id="IPR001650">
    <property type="entry name" value="Helicase_C-like"/>
</dbReference>
<dbReference type="InterPro" id="IPR027417">
    <property type="entry name" value="P-loop_NTPase"/>
</dbReference>
<dbReference type="PANTHER" id="PTHR14025">
    <property type="entry name" value="FANCONI ANEMIA GROUP M FANCM FAMILY MEMBER"/>
    <property type="match status" value="1"/>
</dbReference>
<dbReference type="PANTHER" id="PTHR14025:SF20">
    <property type="entry name" value="FANCONI ANEMIA GROUP M PROTEIN"/>
    <property type="match status" value="1"/>
</dbReference>
<dbReference type="Pfam" id="PF00271">
    <property type="entry name" value="Helicase_C"/>
    <property type="match status" value="1"/>
</dbReference>
<dbReference type="Pfam" id="PF04851">
    <property type="entry name" value="ResIII"/>
    <property type="match status" value="1"/>
</dbReference>
<dbReference type="SMART" id="SM00487">
    <property type="entry name" value="DEXDc"/>
    <property type="match status" value="1"/>
</dbReference>
<dbReference type="SMART" id="SM00490">
    <property type="entry name" value="HELICc"/>
    <property type="match status" value="1"/>
</dbReference>
<dbReference type="SUPFAM" id="SSF52540">
    <property type="entry name" value="P-loop containing nucleoside triphosphate hydrolases"/>
    <property type="match status" value="1"/>
</dbReference>
<dbReference type="PROSITE" id="PS00690">
    <property type="entry name" value="DEAH_ATP_HELICASE"/>
    <property type="match status" value="1"/>
</dbReference>
<dbReference type="PROSITE" id="PS51192">
    <property type="entry name" value="HELICASE_ATP_BIND_1"/>
    <property type="match status" value="1"/>
</dbReference>
<dbReference type="PROSITE" id="PS51194">
    <property type="entry name" value="HELICASE_CTER"/>
    <property type="match status" value="1"/>
</dbReference>
<reference key="1">
    <citation type="journal article" date="2004" name="Proc. Natl. Acad. Sci. U.S.A.">
        <title>The diploid genome sequence of Candida albicans.</title>
        <authorList>
            <person name="Jones T."/>
            <person name="Federspiel N.A."/>
            <person name="Chibana H."/>
            <person name="Dungan J."/>
            <person name="Kalman S."/>
            <person name="Magee B.B."/>
            <person name="Newport G."/>
            <person name="Thorstenson Y.R."/>
            <person name="Agabian N."/>
            <person name="Magee P.T."/>
            <person name="Davis R.W."/>
            <person name="Scherer S."/>
        </authorList>
    </citation>
    <scope>NUCLEOTIDE SEQUENCE [LARGE SCALE GENOMIC DNA]</scope>
    <source>
        <strain>SC5314 / ATCC MYA-2876</strain>
    </source>
</reference>
<reference key="2">
    <citation type="journal article" date="2007" name="Genome Biol.">
        <title>Assembly of the Candida albicans genome into sixteen supercontigs aligned on the eight chromosomes.</title>
        <authorList>
            <person name="van het Hoog M."/>
            <person name="Rast T.J."/>
            <person name="Martchenko M."/>
            <person name="Grindle S."/>
            <person name="Dignard D."/>
            <person name="Hogues H."/>
            <person name="Cuomo C."/>
            <person name="Berriman M."/>
            <person name="Scherer S."/>
            <person name="Magee B.B."/>
            <person name="Whiteway M."/>
            <person name="Chibana H."/>
            <person name="Nantel A."/>
            <person name="Magee P.T."/>
        </authorList>
    </citation>
    <scope>GENOME REANNOTATION</scope>
    <source>
        <strain>SC5314 / ATCC MYA-2876</strain>
    </source>
</reference>
<reference key="3">
    <citation type="journal article" date="2013" name="Genome Biol.">
        <title>Assembly of a phased diploid Candida albicans genome facilitates allele-specific measurements and provides a simple model for repeat and indel structure.</title>
        <authorList>
            <person name="Muzzey D."/>
            <person name="Schwartz K."/>
            <person name="Weissman J.S."/>
            <person name="Sherlock G."/>
        </authorList>
    </citation>
    <scope>NUCLEOTIDE SEQUENCE [LARGE SCALE GENOMIC DNA]</scope>
    <scope>GENOME REANNOTATION</scope>
    <source>
        <strain>SC5314 / ATCC MYA-2876</strain>
    </source>
</reference>
<gene>
    <name evidence="1" type="primary">MPH1</name>
    <name type="ordered locus">CAALFM_C406190CA</name>
    <name type="ORF">CaO19.10436</name>
    <name type="ORF">CaO19.2919</name>
</gene>
<keyword id="KW-0067">ATP-binding</keyword>
<keyword id="KW-0227">DNA damage</keyword>
<keyword id="KW-0234">DNA repair</keyword>
<keyword id="KW-0238">DNA-binding</keyword>
<keyword id="KW-0347">Helicase</keyword>
<keyword id="KW-0378">Hydrolase</keyword>
<keyword id="KW-0547">Nucleotide-binding</keyword>
<keyword id="KW-0539">Nucleus</keyword>
<keyword id="KW-1185">Reference proteome</keyword>
<evidence type="ECO:0000250" key="1">
    <source>
        <dbReference type="UniProtKB" id="P40562"/>
    </source>
</evidence>
<evidence type="ECO:0000250" key="2">
    <source>
        <dbReference type="UniProtKB" id="Q9UT23"/>
    </source>
</evidence>
<evidence type="ECO:0000255" key="3">
    <source>
        <dbReference type="PROSITE-ProRule" id="PRU00541"/>
    </source>
</evidence>
<evidence type="ECO:0000255" key="4">
    <source>
        <dbReference type="PROSITE-ProRule" id="PRU00542"/>
    </source>
</evidence>
<evidence type="ECO:0000256" key="5">
    <source>
        <dbReference type="SAM" id="MobiDB-lite"/>
    </source>
</evidence>
<evidence type="ECO:0000305" key="6"/>